<evidence type="ECO:0000255" key="1">
    <source>
        <dbReference type="HAMAP-Rule" id="MF_00754"/>
    </source>
</evidence>
<evidence type="ECO:0000269" key="2">
    <source>
    </source>
</evidence>
<evidence type="ECO:0000269" key="3">
    <source>
    </source>
</evidence>
<evidence type="ECO:0000269" key="4">
    <source>
    </source>
</evidence>
<evidence type="ECO:0000269" key="5">
    <source>
    </source>
</evidence>
<evidence type="ECO:0000269" key="6">
    <source>
    </source>
</evidence>
<evidence type="ECO:0007829" key="7">
    <source>
        <dbReference type="PDB" id="2KI7"/>
    </source>
</evidence>
<reference key="1">
    <citation type="journal article" date="1999" name="Genetics">
        <title>Divergence of the hyperthermophilic archaea Pyrococcus furiosus and P. horikoshii inferred from complete genomic sequences.</title>
        <authorList>
            <person name="Maeder D.L."/>
            <person name="Weiss R.B."/>
            <person name="Dunn D.M."/>
            <person name="Cherry J.L."/>
            <person name="Gonzalez J.M."/>
            <person name="DiRuggiero J."/>
            <person name="Robb F.T."/>
        </authorList>
    </citation>
    <scope>NUCLEOTIDE SEQUENCE [LARGE SCALE GENOMIC DNA]</scope>
    <source>
        <strain>ATCC 43587 / DSM 3638 / JCM 8422 / Vc1</strain>
    </source>
</reference>
<reference key="2">
    <citation type="journal article" date="2006" name="Proc. Natl. Acad. Sci. U.S.A.">
        <title>Functional reconstitution and characterization of Pyrococcus furiosus RNase P.</title>
        <authorList>
            <person name="Tsai H.Y."/>
            <person name="Pulukkunat D.K."/>
            <person name="Woznick W.K."/>
            <person name="Gopalan V."/>
        </authorList>
    </citation>
    <scope>FUNCTION</scope>
    <scope>CATALYTIC ACTIVITY</scope>
    <scope>BIOPHYSICOCHEMICAL PROPERTIES</scope>
    <scope>SUBUNIT</scope>
    <source>
        <strain>ATCC 43587 / DSM 3638 / JCM 8422 / Vc1</strain>
    </source>
</reference>
<reference key="3">
    <citation type="journal article" date="2008" name="Biochemistry">
        <title>Solution structure of Pyrococcus furiosus RPP21, a component of the archaeal RNase P holoenzyme, and interactions with its RPP29 protein partner.</title>
        <authorList>
            <person name="Amero C.D."/>
            <person name="Boomershine W.P."/>
            <person name="Xu Y."/>
            <person name="Foster M."/>
        </authorList>
    </citation>
    <scope>INTERACTION WITH RNP1</scope>
    <scope>SUBUNIT</scope>
</reference>
<reference key="4">
    <citation type="journal article" date="2011" name="J. Mol. Biol.">
        <title>Cooperative RNP assembly: complementary rescue of structural defects by protein and RNA subunits of archaeal RNase P.</title>
        <authorList>
            <person name="Chen W.Y."/>
            <person name="Xu Y."/>
            <person name="Cho I.M."/>
            <person name="Oruganti S.V."/>
            <person name="Foster M.P."/>
            <person name="Gopalan V."/>
        </authorList>
    </citation>
    <scope>FUNCTION</scope>
    <scope>INTERACTION WITH RNP4</scope>
    <scope>SUBUNIT</scope>
    <scope>DOMAIN</scope>
    <scope>MUTAGENESIS OF 1-MET--GLN-17; 1-MET--ILE-24 AND 1-MET--ARG-31</scope>
</reference>
<reference key="5">
    <citation type="journal article" date="2012" name="Nucleic Acids Res.">
        <title>Fidelity of tRNA 5'-maturation: a possible basis for the functional dependence of archaeal and eukaryal RNase P on multiple protein cofactors.</title>
        <authorList>
            <person name="Chen W.Y."/>
            <person name="Singh D."/>
            <person name="Lai L.B."/>
            <person name="Stiffler M.A."/>
            <person name="Lai H.D."/>
            <person name="Foster M.P."/>
            <person name="Gopalan V."/>
        </authorList>
    </citation>
    <scope>FUNCTION</scope>
    <scope>INTERACTION WITH RNP4</scope>
    <scope>SUBUNIT</scope>
</reference>
<reference key="6">
    <citation type="journal article" date="2009" name="J. Mol. Biol.">
        <title>Solution structure of an archaeal RNase P binary protein complex: formation of the 30-kDa complex between Pyrococcus furiosus RPP21 and RPP29 is accompanied by coupled protein folding and highlights critical features for protein-protein and protein-RNA interactions.</title>
        <authorList>
            <person name="Xu Y."/>
            <person name="Amero C.D."/>
            <person name="Pulukkunat D.K."/>
            <person name="Gopalan V."/>
            <person name="Foster M.P."/>
        </authorList>
    </citation>
    <scope>STRUCTURE BY NMR</scope>
    <scope>INTERACTION WITH RNP4</scope>
    <scope>SUBUNIT</scope>
</reference>
<accession>Q8U007</accession>
<comment type="function">
    <text evidence="1 2 5 6">Part of ribonuclease P, a protein complex that generates mature tRNA molecules by cleaving their 5'-ends. The RNA is catalytic, but its KM for pre-tRNA is 170-fold decreased in the presence of the 4 known protein subunits (Rnp1-4). The protein subunits also decrease the amount of Mg(2+) needed for activity.</text>
</comment>
<comment type="catalytic activity">
    <reaction evidence="1 2">
        <text>Endonucleolytic cleavage of RNA, removing 5'-extranucleotides from tRNA precursor.</text>
        <dbReference type="EC" id="3.1.26.5"/>
    </reaction>
</comment>
<comment type="biophysicochemical properties">
    <kinetics>
        <KM evidence="2">0.18 uM for E.coli pre-tRNA(Tyr)</KM>
        <text>kcat is 9.5 min(-1). For enzyme reconstituted with RNA and 4 known subunits (Rnp1-4).</text>
    </kinetics>
</comment>
<comment type="subunit">
    <text evidence="2 3 4 5 6">Consists of a catalytic RNA component and at least 4 protein subunits. Forms a subcomplex with Rnp4 which stimulates the catalytic RNA.</text>
</comment>
<comment type="subcellular location">
    <subcellularLocation>
        <location evidence="1">Cytoplasm</location>
    </subcellularLocation>
</comment>
<comment type="domain">
    <text evidence="5">Interaction with Rnp4 is mediated by the N-terminus; short deletion mutants are still able to reconstitute RNase P activity.</text>
</comment>
<comment type="similarity">
    <text evidence="1">Belongs to the eukaryotic/archaeal RNase P protein component 1 family.</text>
</comment>
<protein>
    <recommendedName>
        <fullName evidence="1">Ribonuclease P protein component 1</fullName>
        <shortName evidence="1">RNase P component 1</shortName>
        <ecNumber evidence="1">3.1.26.5</ecNumber>
    </recommendedName>
    <alternativeName>
        <fullName evidence="1">Rpp29</fullName>
    </alternativeName>
</protein>
<organism>
    <name type="scientific">Pyrococcus furiosus (strain ATCC 43587 / DSM 3638 / JCM 8422 / Vc1)</name>
    <dbReference type="NCBI Taxonomy" id="186497"/>
    <lineage>
        <taxon>Archaea</taxon>
        <taxon>Methanobacteriati</taxon>
        <taxon>Methanobacteriota</taxon>
        <taxon>Thermococci</taxon>
        <taxon>Thermococcales</taxon>
        <taxon>Thermococcaceae</taxon>
        <taxon>Pyrococcus</taxon>
    </lineage>
</organism>
<keyword id="KW-0002">3D-structure</keyword>
<keyword id="KW-0963">Cytoplasm</keyword>
<keyword id="KW-0255">Endonuclease</keyword>
<keyword id="KW-0378">Hydrolase</keyword>
<keyword id="KW-0540">Nuclease</keyword>
<keyword id="KW-1185">Reference proteome</keyword>
<keyword id="KW-0819">tRNA processing</keyword>
<sequence>MWRNSEERENRTSGRSQGSYQEIIGRTWIFRGAHRGRVNKKNIVWHELIGLKVRVVNSTHPGYVGIEGYVIDETRNMLVIAGENKVWKVPKDVCIFEFETWDGTKIKISGEKLVGRPEMRLKKRWRK</sequence>
<proteinExistence type="evidence at protein level"/>
<gene>
    <name evidence="1" type="primary">rnp1</name>
    <name type="ordered locus">PF1816</name>
</gene>
<feature type="chain" id="PRO_0000128436" description="Ribonuclease P protein component 1">
    <location>
        <begin position="1"/>
        <end position="127"/>
    </location>
</feature>
<feature type="mutagenesis site" description="No interaction with Rnp4, does not reconstitute RNase P activity." evidence="5">
    <location>
        <begin position="1"/>
        <end position="31"/>
    </location>
</feature>
<feature type="mutagenesis site" description="No interaction with Rnp4, reconstitutes RNase P activity." evidence="5">
    <location>
        <begin position="1"/>
        <end position="24"/>
    </location>
</feature>
<feature type="mutagenesis site" description="Interacts normally with Rnp4, reconstitutes RNase P activity." evidence="5">
    <location>
        <begin position="1"/>
        <end position="17"/>
    </location>
</feature>
<feature type="turn" evidence="7">
    <location>
        <begin position="20"/>
        <end position="22"/>
    </location>
</feature>
<feature type="strand" evidence="7">
    <location>
        <begin position="23"/>
        <end position="25"/>
    </location>
</feature>
<feature type="helix" evidence="7">
    <location>
        <begin position="27"/>
        <end position="31"/>
    </location>
</feature>
<feature type="helix" evidence="7">
    <location>
        <begin position="40"/>
        <end position="43"/>
    </location>
</feature>
<feature type="strand" evidence="7">
    <location>
        <begin position="52"/>
        <end position="59"/>
    </location>
</feature>
<feature type="turn" evidence="7">
    <location>
        <begin position="61"/>
        <end position="65"/>
    </location>
</feature>
<feature type="strand" evidence="7">
    <location>
        <begin position="66"/>
        <end position="74"/>
    </location>
</feature>
<feature type="strand" evidence="7">
    <location>
        <begin position="77"/>
        <end position="82"/>
    </location>
</feature>
<feature type="strand" evidence="7">
    <location>
        <begin position="85"/>
        <end position="88"/>
    </location>
</feature>
<feature type="strand" evidence="7">
    <location>
        <begin position="91"/>
        <end position="100"/>
    </location>
</feature>
<feature type="turn" evidence="7">
    <location>
        <begin position="101"/>
        <end position="103"/>
    </location>
</feature>
<feature type="turn" evidence="7">
    <location>
        <begin position="110"/>
        <end position="113"/>
    </location>
</feature>
<feature type="helix" evidence="7">
    <location>
        <begin position="117"/>
        <end position="121"/>
    </location>
</feature>
<name>RNP1_PYRFU</name>
<dbReference type="EC" id="3.1.26.5" evidence="1"/>
<dbReference type="EMBL" id="AE009950">
    <property type="protein sequence ID" value="AAL81940.1"/>
    <property type="molecule type" value="Genomic_DNA"/>
</dbReference>
<dbReference type="PDB" id="2KI7">
    <property type="method" value="NMR"/>
    <property type="chains" value="A=1-127"/>
</dbReference>
<dbReference type="PDBsum" id="2KI7"/>
<dbReference type="BMRB" id="Q8U007"/>
<dbReference type="SMR" id="Q8U007"/>
<dbReference type="STRING" id="186497.PF1816"/>
<dbReference type="PaxDb" id="186497-PF1816"/>
<dbReference type="KEGG" id="pfu:PF1816"/>
<dbReference type="PATRIC" id="fig|186497.12.peg.1887"/>
<dbReference type="eggNOG" id="arCOG00784">
    <property type="taxonomic scope" value="Archaea"/>
</dbReference>
<dbReference type="HOGENOM" id="CLU_107020_1_0_2"/>
<dbReference type="OrthoDB" id="39019at2157"/>
<dbReference type="PhylomeDB" id="Q8U007"/>
<dbReference type="EvolutionaryTrace" id="Q8U007"/>
<dbReference type="Proteomes" id="UP000001013">
    <property type="component" value="Chromosome"/>
</dbReference>
<dbReference type="GO" id="GO:0005737">
    <property type="term" value="C:cytoplasm"/>
    <property type="evidence" value="ECO:0007669"/>
    <property type="project" value="UniProtKB-SubCell"/>
</dbReference>
<dbReference type="GO" id="GO:0000172">
    <property type="term" value="C:ribonuclease MRP complex"/>
    <property type="evidence" value="ECO:0007669"/>
    <property type="project" value="InterPro"/>
</dbReference>
<dbReference type="GO" id="GO:0030677">
    <property type="term" value="C:ribonuclease P complex"/>
    <property type="evidence" value="ECO:0007669"/>
    <property type="project" value="UniProtKB-UniRule"/>
</dbReference>
<dbReference type="GO" id="GO:0004526">
    <property type="term" value="F:ribonuclease P activity"/>
    <property type="evidence" value="ECO:0007669"/>
    <property type="project" value="UniProtKB-UniRule"/>
</dbReference>
<dbReference type="GO" id="GO:0033204">
    <property type="term" value="F:ribonuclease P RNA binding"/>
    <property type="evidence" value="ECO:0007669"/>
    <property type="project" value="InterPro"/>
</dbReference>
<dbReference type="GO" id="GO:0006364">
    <property type="term" value="P:rRNA processing"/>
    <property type="evidence" value="ECO:0007669"/>
    <property type="project" value="TreeGrafter"/>
</dbReference>
<dbReference type="GO" id="GO:0001682">
    <property type="term" value="P:tRNA 5'-leader removal"/>
    <property type="evidence" value="ECO:0007669"/>
    <property type="project" value="UniProtKB-UniRule"/>
</dbReference>
<dbReference type="FunFam" id="2.30.30.210:FF:000015">
    <property type="entry name" value="Ribonuclease P protein component 1"/>
    <property type="match status" value="1"/>
</dbReference>
<dbReference type="Gene3D" id="2.30.30.210">
    <property type="entry name" value="Ribonuclease P/MRP, subunit p29"/>
    <property type="match status" value="1"/>
</dbReference>
<dbReference type="HAMAP" id="MF_00754">
    <property type="entry name" value="RNase_P_1"/>
    <property type="match status" value="1"/>
</dbReference>
<dbReference type="InterPro" id="IPR016848">
    <property type="entry name" value="RNase_P/MRP_Rpp29-subunit"/>
</dbReference>
<dbReference type="InterPro" id="IPR036980">
    <property type="entry name" value="RNase_P/MRP_Rpp29_sf"/>
</dbReference>
<dbReference type="InterPro" id="IPR023538">
    <property type="entry name" value="RNP1"/>
</dbReference>
<dbReference type="InterPro" id="IPR023534">
    <property type="entry name" value="Rof/RNase_P-like"/>
</dbReference>
<dbReference type="InterPro" id="IPR002730">
    <property type="entry name" value="Rpp29/RNP1"/>
</dbReference>
<dbReference type="NCBIfam" id="NF046110">
    <property type="entry name" value="RNaseP1Mthb"/>
    <property type="match status" value="1"/>
</dbReference>
<dbReference type="PANTHER" id="PTHR13348:SF0">
    <property type="entry name" value="RIBONUCLEASE P PROTEIN SUBUNIT P29"/>
    <property type="match status" value="1"/>
</dbReference>
<dbReference type="PANTHER" id="PTHR13348">
    <property type="entry name" value="RIBONUCLEASE P SUBUNIT P29"/>
    <property type="match status" value="1"/>
</dbReference>
<dbReference type="Pfam" id="PF01868">
    <property type="entry name" value="RNase_P-MRP_p29"/>
    <property type="match status" value="1"/>
</dbReference>
<dbReference type="SMART" id="SM00538">
    <property type="entry name" value="POP4"/>
    <property type="match status" value="1"/>
</dbReference>
<dbReference type="SUPFAM" id="SSF101744">
    <property type="entry name" value="Rof/RNase P subunit-like"/>
    <property type="match status" value="1"/>
</dbReference>